<organismHost>
    <name type="scientific">Orgyia pseudotsugata</name>
    <name type="common">Douglas-fir tussock moth</name>
    <dbReference type="NCBI Taxonomy" id="33414"/>
</organismHost>
<sequence length="236" mass="25501">MNTNKHVKTYMNSIVFDTAAVQAAAALQPIMETEAAQSAQVPHSSEAALQLMVETEAAQSVSAAPQEVANEILQDAGDTSARVITTTDALQVFSEAVQAIGEVIQETADGPHAIIEVKRAVFDATKMLAQLGTAVVKFYSPLFTAPERIVELVYSISLLVRIMKRIIKNDSLDKLTVDGLDSAATLLADVRSIIGDMFEVFVVNFRYAAPAEYFEAVDEMVHTVTDLALHVVKTVC</sequence>
<reference key="1">
    <citation type="journal article" date="1996" name="Virology">
        <title>Characterization of a highly conserved baculovirus structural protein that is specific for occlusion-derived virions.</title>
        <authorList>
            <person name="Theilmann D.A."/>
            <person name="Chantler J.K."/>
            <person name="Stewart S."/>
            <person name="Flipsen H.T.M."/>
            <person name="Vlak J.M."/>
            <person name="Crook N.E."/>
        </authorList>
    </citation>
    <scope>NUCLEOTIDE SEQUENCE [GENOMIC DNA]</scope>
</reference>
<reference key="2">
    <citation type="journal article" date="1997" name="Virology">
        <title>The sequence of the Orgyia pseudotsugata multinucleocapsid nuclear polyhedrosis virus genome.</title>
        <authorList>
            <person name="Ahrens C.H."/>
            <person name="Russell R.R."/>
            <person name="Funk C.J."/>
            <person name="Evans J."/>
            <person name="Harwood S."/>
            <person name="Rohrmann G.F."/>
        </authorList>
    </citation>
    <scope>NUCLEOTIDE SEQUENCE [LARGE SCALE GENOMIC DNA]</scope>
</reference>
<gene>
    <name type="primary">OPEP-2</name>
    <name type="ORF">ORF148</name>
</gene>
<organism>
    <name type="scientific">Orgyia pseudotsugata multicapsid polyhedrosis virus</name>
    <name type="common">OpMNPV</name>
    <dbReference type="NCBI Taxonomy" id="262177"/>
    <lineage>
        <taxon>Viruses</taxon>
        <taxon>Viruses incertae sedis</taxon>
        <taxon>Naldaviricetes</taxon>
        <taxon>Lefavirales</taxon>
        <taxon>Baculoviridae</taxon>
        <taxon>Alphabaculovirus</taxon>
        <taxon>Alphabaculovirus orpseudotsugatae</taxon>
    </lineage>
</organism>
<feature type="chain" id="PRO_0000132933" description="OPEP-2 protein">
    <location>
        <begin position="1"/>
        <end position="236"/>
    </location>
</feature>
<protein>
    <recommendedName>
        <fullName>OPEP-2 protein</fullName>
    </recommendedName>
    <alternativeName>
        <fullName>P25</fullName>
    </alternativeName>
</protein>
<keyword id="KW-1185">Reference proteome</keyword>
<name>OPEP2_NPVOP</name>
<proteinExistence type="predicted"/>
<accession>P89029</accession>
<accession>O12561</accession>
<dbReference type="EMBL" id="U72650">
    <property type="protein sequence ID" value="AAB37304.1"/>
    <property type="molecule type" value="Genomic_DNA"/>
</dbReference>
<dbReference type="EMBL" id="U75930">
    <property type="protein sequence ID" value="AAC59147.1"/>
    <property type="molecule type" value="Genomic_DNA"/>
</dbReference>
<dbReference type="RefSeq" id="NP_046304.1">
    <property type="nucleotide sequence ID" value="NC_001875.2"/>
</dbReference>
<dbReference type="KEGG" id="vg:912080"/>
<dbReference type="Proteomes" id="UP000009248">
    <property type="component" value="Genome"/>
</dbReference>